<name>PDXS_DEHM1</name>
<keyword id="KW-0456">Lyase</keyword>
<keyword id="KW-0663">Pyridoxal phosphate</keyword>
<keyword id="KW-0704">Schiff base</keyword>
<protein>
    <recommendedName>
        <fullName evidence="1">Pyridoxal 5'-phosphate synthase subunit PdxS</fullName>
        <shortName evidence="1">PLP synthase subunit PdxS</shortName>
        <ecNumber evidence="1">4.3.3.6</ecNumber>
    </recommendedName>
    <alternativeName>
        <fullName evidence="1">Pdx1</fullName>
    </alternativeName>
</protein>
<organism>
    <name type="scientific">Dehalococcoides mccartyi (strain ATCC BAA-2266 / KCTC 15142 / 195)</name>
    <name type="common">Dehalococcoides ethenogenes (strain 195)</name>
    <dbReference type="NCBI Taxonomy" id="243164"/>
    <lineage>
        <taxon>Bacteria</taxon>
        <taxon>Bacillati</taxon>
        <taxon>Chloroflexota</taxon>
        <taxon>Dehalococcoidia</taxon>
        <taxon>Dehalococcoidales</taxon>
        <taxon>Dehalococcoidaceae</taxon>
        <taxon>Dehalococcoides</taxon>
    </lineage>
</organism>
<evidence type="ECO:0000255" key="1">
    <source>
        <dbReference type="HAMAP-Rule" id="MF_01824"/>
    </source>
</evidence>
<gene>
    <name evidence="1" type="primary">pdxS</name>
    <name type="ordered locus">DET0380</name>
</gene>
<accession>Q3Z9H3</accession>
<sequence>METGTFKVKSGLAQMLKGGVIMDVTTPEQAKIAEEAGACAVMALERVPSDIRAAGGVARMADPTIIEKIMKVVSIPVMAKCRIGHFVEAQILESMGVDYIDESEVLTPADESFHVWKHDFKVPFVCGCRDLGEALRRIGEGAAMIRTKGEAGTGNIVEAVRHMRSVMGSVRRVQSMSADELSAYAKEINAPLELVLELHKTGKLPVVNFAAGGVATPADAALMMQLGADGVFVGSGIFKSSDPAAMAKAVVKAVTHYKDAKVLAEISKGLGDAMPGLDIKQIEPDKLISRRGW</sequence>
<dbReference type="EC" id="4.3.3.6" evidence="1"/>
<dbReference type="EMBL" id="CP000027">
    <property type="protein sequence ID" value="AAW40334.1"/>
    <property type="molecule type" value="Genomic_DNA"/>
</dbReference>
<dbReference type="RefSeq" id="WP_010936159.1">
    <property type="nucleotide sequence ID" value="NC_002936.3"/>
</dbReference>
<dbReference type="SMR" id="Q3Z9H3"/>
<dbReference type="FunCoup" id="Q3Z9H3">
    <property type="interactions" value="165"/>
</dbReference>
<dbReference type="STRING" id="243164.DET0380"/>
<dbReference type="GeneID" id="3230298"/>
<dbReference type="KEGG" id="det:DET0380"/>
<dbReference type="eggNOG" id="COG0214">
    <property type="taxonomic scope" value="Bacteria"/>
</dbReference>
<dbReference type="HOGENOM" id="CLU_055352_1_0_0"/>
<dbReference type="InParanoid" id="Q3Z9H3"/>
<dbReference type="UniPathway" id="UPA00245"/>
<dbReference type="Proteomes" id="UP000008289">
    <property type="component" value="Chromosome"/>
</dbReference>
<dbReference type="GO" id="GO:0036381">
    <property type="term" value="F:pyridoxal 5'-phosphate synthase (glutamine hydrolysing) activity"/>
    <property type="evidence" value="ECO:0007669"/>
    <property type="project" value="UniProtKB-UniRule"/>
</dbReference>
<dbReference type="GO" id="GO:0006520">
    <property type="term" value="P:amino acid metabolic process"/>
    <property type="evidence" value="ECO:0007669"/>
    <property type="project" value="TreeGrafter"/>
</dbReference>
<dbReference type="GO" id="GO:0042823">
    <property type="term" value="P:pyridoxal phosphate biosynthetic process"/>
    <property type="evidence" value="ECO:0007669"/>
    <property type="project" value="UniProtKB-UniRule"/>
</dbReference>
<dbReference type="GO" id="GO:0008615">
    <property type="term" value="P:pyridoxine biosynthetic process"/>
    <property type="evidence" value="ECO:0007669"/>
    <property type="project" value="TreeGrafter"/>
</dbReference>
<dbReference type="CDD" id="cd04727">
    <property type="entry name" value="pdxS"/>
    <property type="match status" value="1"/>
</dbReference>
<dbReference type="FunFam" id="3.20.20.70:FF:000001">
    <property type="entry name" value="Pyridoxine biosynthesis protein PDX1"/>
    <property type="match status" value="1"/>
</dbReference>
<dbReference type="Gene3D" id="3.20.20.70">
    <property type="entry name" value="Aldolase class I"/>
    <property type="match status" value="1"/>
</dbReference>
<dbReference type="HAMAP" id="MF_01824">
    <property type="entry name" value="PdxS"/>
    <property type="match status" value="1"/>
</dbReference>
<dbReference type="InterPro" id="IPR013785">
    <property type="entry name" value="Aldolase_TIM"/>
</dbReference>
<dbReference type="InterPro" id="IPR001852">
    <property type="entry name" value="PdxS/SNZ"/>
</dbReference>
<dbReference type="InterPro" id="IPR033755">
    <property type="entry name" value="PdxS/SNZ_N"/>
</dbReference>
<dbReference type="InterPro" id="IPR011060">
    <property type="entry name" value="RibuloseP-bd_barrel"/>
</dbReference>
<dbReference type="NCBIfam" id="NF003215">
    <property type="entry name" value="PRK04180.1"/>
    <property type="match status" value="1"/>
</dbReference>
<dbReference type="NCBIfam" id="TIGR00343">
    <property type="entry name" value="pyridoxal 5'-phosphate synthase lyase subunit PdxS"/>
    <property type="match status" value="1"/>
</dbReference>
<dbReference type="PANTHER" id="PTHR31829">
    <property type="entry name" value="PYRIDOXAL 5'-PHOSPHATE SYNTHASE SUBUNIT SNZ1-RELATED"/>
    <property type="match status" value="1"/>
</dbReference>
<dbReference type="PANTHER" id="PTHR31829:SF0">
    <property type="entry name" value="PYRIDOXAL 5'-PHOSPHATE SYNTHASE SUBUNIT SNZ1-RELATED"/>
    <property type="match status" value="1"/>
</dbReference>
<dbReference type="Pfam" id="PF01680">
    <property type="entry name" value="SOR_SNZ"/>
    <property type="match status" value="1"/>
</dbReference>
<dbReference type="PIRSF" id="PIRSF029271">
    <property type="entry name" value="Pdx1"/>
    <property type="match status" value="1"/>
</dbReference>
<dbReference type="SUPFAM" id="SSF51366">
    <property type="entry name" value="Ribulose-phoshate binding barrel"/>
    <property type="match status" value="1"/>
</dbReference>
<dbReference type="PROSITE" id="PS01235">
    <property type="entry name" value="PDXS_SNZ_1"/>
    <property type="match status" value="1"/>
</dbReference>
<dbReference type="PROSITE" id="PS51129">
    <property type="entry name" value="PDXS_SNZ_2"/>
    <property type="match status" value="1"/>
</dbReference>
<feature type="chain" id="PRO_1000070367" description="Pyridoxal 5'-phosphate synthase subunit PdxS">
    <location>
        <begin position="1"/>
        <end position="293"/>
    </location>
</feature>
<feature type="active site" description="Schiff-base intermediate with D-ribose 5-phosphate" evidence="1">
    <location>
        <position position="80"/>
    </location>
</feature>
<feature type="binding site" evidence="1">
    <location>
        <position position="23"/>
    </location>
    <ligand>
        <name>D-ribose 5-phosphate</name>
        <dbReference type="ChEBI" id="CHEBI:78346"/>
    </ligand>
</feature>
<feature type="binding site" evidence="1">
    <location>
        <position position="152"/>
    </location>
    <ligand>
        <name>D-ribose 5-phosphate</name>
        <dbReference type="ChEBI" id="CHEBI:78346"/>
    </ligand>
</feature>
<feature type="binding site" evidence="1">
    <location>
        <position position="164"/>
    </location>
    <ligand>
        <name>D-glyceraldehyde 3-phosphate</name>
        <dbReference type="ChEBI" id="CHEBI:59776"/>
    </ligand>
</feature>
<feature type="binding site" evidence="1">
    <location>
        <position position="213"/>
    </location>
    <ligand>
        <name>D-ribose 5-phosphate</name>
        <dbReference type="ChEBI" id="CHEBI:78346"/>
    </ligand>
</feature>
<feature type="binding site" evidence="1">
    <location>
        <begin position="234"/>
        <end position="235"/>
    </location>
    <ligand>
        <name>D-ribose 5-phosphate</name>
        <dbReference type="ChEBI" id="CHEBI:78346"/>
    </ligand>
</feature>
<comment type="function">
    <text evidence="1">Catalyzes the formation of pyridoxal 5'-phosphate from ribose 5-phosphate (RBP), glyceraldehyde 3-phosphate (G3P) and ammonia. The ammonia is provided by the PdxT subunit. Can also use ribulose 5-phosphate and dihydroxyacetone phosphate as substrates, resulting from enzyme-catalyzed isomerization of RBP and G3P, respectively.</text>
</comment>
<comment type="catalytic activity">
    <reaction evidence="1">
        <text>aldehydo-D-ribose 5-phosphate + D-glyceraldehyde 3-phosphate + L-glutamine = pyridoxal 5'-phosphate + L-glutamate + phosphate + 3 H2O + H(+)</text>
        <dbReference type="Rhea" id="RHEA:31507"/>
        <dbReference type="ChEBI" id="CHEBI:15377"/>
        <dbReference type="ChEBI" id="CHEBI:15378"/>
        <dbReference type="ChEBI" id="CHEBI:29985"/>
        <dbReference type="ChEBI" id="CHEBI:43474"/>
        <dbReference type="ChEBI" id="CHEBI:58273"/>
        <dbReference type="ChEBI" id="CHEBI:58359"/>
        <dbReference type="ChEBI" id="CHEBI:59776"/>
        <dbReference type="ChEBI" id="CHEBI:597326"/>
        <dbReference type="EC" id="4.3.3.6"/>
    </reaction>
</comment>
<comment type="pathway">
    <text evidence="1">Cofactor biosynthesis; pyridoxal 5'-phosphate biosynthesis.</text>
</comment>
<comment type="subunit">
    <text evidence="1">In the presence of PdxT, forms a dodecamer of heterodimers.</text>
</comment>
<comment type="similarity">
    <text evidence="1">Belongs to the PdxS/SNZ family.</text>
</comment>
<proteinExistence type="inferred from homology"/>
<reference key="1">
    <citation type="journal article" date="2005" name="Science">
        <title>Genome sequence of the PCE-dechlorinating bacterium Dehalococcoides ethenogenes.</title>
        <authorList>
            <person name="Seshadri R."/>
            <person name="Adrian L."/>
            <person name="Fouts D.E."/>
            <person name="Eisen J.A."/>
            <person name="Phillippy A.M."/>
            <person name="Methe B.A."/>
            <person name="Ward N.L."/>
            <person name="Nelson W.C."/>
            <person name="DeBoy R.T."/>
            <person name="Khouri H.M."/>
            <person name="Kolonay J.F."/>
            <person name="Dodson R.J."/>
            <person name="Daugherty S.C."/>
            <person name="Brinkac L.M."/>
            <person name="Sullivan S.A."/>
            <person name="Madupu R."/>
            <person name="Nelson K.E."/>
            <person name="Kang K.H."/>
            <person name="Impraim M."/>
            <person name="Tran K."/>
            <person name="Robinson J.M."/>
            <person name="Forberger H.A."/>
            <person name="Fraser C.M."/>
            <person name="Zinder S.H."/>
            <person name="Heidelberg J.F."/>
        </authorList>
    </citation>
    <scope>NUCLEOTIDE SEQUENCE [LARGE SCALE GENOMIC DNA]</scope>
    <source>
        <strain>ATCC BAA-2266 / KCTC 15142 / 195</strain>
    </source>
</reference>